<reference key="1">
    <citation type="submission" date="1996-08" db="EMBL/GenBank/DDBJ databases">
        <title>The octopine catabolism operon of Rhizobium meliloti A3.</title>
        <authorList>
            <person name="Au S."/>
            <person name="Bergeron J."/>
            <person name="Dion P."/>
        </authorList>
    </citation>
    <scope>NUCLEOTIDE SEQUENCE [GENOMIC DNA]</scope>
    <source>
        <strain>A3</strain>
    </source>
</reference>
<proteinExistence type="inferred from homology"/>
<organism>
    <name type="scientific">Rhizobium meliloti</name>
    <name type="common">Ensifer meliloti</name>
    <name type="synonym">Sinorhizobium meliloti</name>
    <dbReference type="NCBI Taxonomy" id="382"/>
    <lineage>
        <taxon>Bacteria</taxon>
        <taxon>Pseudomonadati</taxon>
        <taxon>Pseudomonadota</taxon>
        <taxon>Alphaproteobacteria</taxon>
        <taxon>Hyphomicrobiales</taxon>
        <taxon>Rhizobiaceae</taxon>
        <taxon>Sinorhizobium/Ensifer group</taxon>
        <taxon>Sinorhizobium</taxon>
    </lineage>
</organism>
<comment type="function">
    <text>Component of the octopine active transport system probably consisting of four subunits: Q, M, P and T.</text>
</comment>
<comment type="subcellular location">
    <subcellularLocation>
        <location evidence="1">Cell inner membrane</location>
        <topology evidence="2">Multi-pass membrane protein</topology>
    </subcellularLocation>
</comment>
<comment type="similarity">
    <text evidence="3">Belongs to the binding-protein-dependent transport system permease family. HisMQ subfamily.</text>
</comment>
<dbReference type="EMBL" id="U66830">
    <property type="protein sequence ID" value="AAB07519.1"/>
    <property type="molecule type" value="Genomic_DNA"/>
</dbReference>
<dbReference type="SMR" id="P72296"/>
<dbReference type="GO" id="GO:0043190">
    <property type="term" value="C:ATP-binding cassette (ABC) transporter complex"/>
    <property type="evidence" value="ECO:0007669"/>
    <property type="project" value="InterPro"/>
</dbReference>
<dbReference type="GO" id="GO:0022857">
    <property type="term" value="F:transmembrane transporter activity"/>
    <property type="evidence" value="ECO:0007669"/>
    <property type="project" value="InterPro"/>
</dbReference>
<dbReference type="GO" id="GO:0006865">
    <property type="term" value="P:amino acid transport"/>
    <property type="evidence" value="ECO:0007669"/>
    <property type="project" value="TreeGrafter"/>
</dbReference>
<dbReference type="CDD" id="cd06261">
    <property type="entry name" value="TM_PBP2"/>
    <property type="match status" value="1"/>
</dbReference>
<dbReference type="Gene3D" id="1.10.3720.10">
    <property type="entry name" value="MetI-like"/>
    <property type="match status" value="1"/>
</dbReference>
<dbReference type="InterPro" id="IPR010065">
    <property type="entry name" value="AA_ABC_transptr_permease_3TM"/>
</dbReference>
<dbReference type="InterPro" id="IPR043429">
    <property type="entry name" value="ArtM/GltK/GlnP/TcyL/YhdX-like"/>
</dbReference>
<dbReference type="InterPro" id="IPR000515">
    <property type="entry name" value="MetI-like"/>
</dbReference>
<dbReference type="InterPro" id="IPR035906">
    <property type="entry name" value="MetI-like_sf"/>
</dbReference>
<dbReference type="NCBIfam" id="TIGR01726">
    <property type="entry name" value="HEQRo_perm_3TM"/>
    <property type="match status" value="1"/>
</dbReference>
<dbReference type="PANTHER" id="PTHR30614:SF10">
    <property type="entry name" value="ARGININE ABC TRANSPORTER PERMEASE PROTEIN ARTM"/>
    <property type="match status" value="1"/>
</dbReference>
<dbReference type="PANTHER" id="PTHR30614">
    <property type="entry name" value="MEMBRANE COMPONENT OF AMINO ACID ABC TRANSPORTER"/>
    <property type="match status" value="1"/>
</dbReference>
<dbReference type="Pfam" id="PF00528">
    <property type="entry name" value="BPD_transp_1"/>
    <property type="match status" value="1"/>
</dbReference>
<dbReference type="SUPFAM" id="SSF161098">
    <property type="entry name" value="MetI-like"/>
    <property type="match status" value="1"/>
</dbReference>
<dbReference type="PROSITE" id="PS50928">
    <property type="entry name" value="ABC_TM1"/>
    <property type="match status" value="1"/>
</dbReference>
<gene>
    <name type="primary">occM</name>
</gene>
<protein>
    <recommendedName>
        <fullName>Octopine transport system permease protein OccM</fullName>
    </recommendedName>
</protein>
<keyword id="KW-0997">Cell inner membrane</keyword>
<keyword id="KW-1003">Cell membrane</keyword>
<keyword id="KW-0472">Membrane</keyword>
<keyword id="KW-0812">Transmembrane</keyword>
<keyword id="KW-1133">Transmembrane helix</keyword>
<keyword id="KW-0813">Transport</keyword>
<accession>P72296</accession>
<evidence type="ECO:0000250" key="1"/>
<evidence type="ECO:0000255" key="2">
    <source>
        <dbReference type="PROSITE-ProRule" id="PRU00441"/>
    </source>
</evidence>
<evidence type="ECO:0000305" key="3"/>
<name>OCCM_RHIML</name>
<feature type="chain" id="PRO_0000060129" description="Octopine transport system permease protein OccM">
    <location>
        <begin position="1"/>
        <end position="245"/>
    </location>
</feature>
<feature type="transmembrane region" description="Helical" evidence="2">
    <location>
        <begin position="12"/>
        <end position="32"/>
    </location>
</feature>
<feature type="transmembrane region" description="Helical" evidence="2">
    <location>
        <begin position="57"/>
        <end position="77"/>
    </location>
</feature>
<feature type="transmembrane region" description="Helical" evidence="2">
    <location>
        <begin position="96"/>
        <end position="116"/>
    </location>
</feature>
<feature type="transmembrane region" description="Helical" evidence="2">
    <location>
        <begin position="163"/>
        <end position="183"/>
    </location>
</feature>
<feature type="transmembrane region" description="Helical" evidence="2">
    <location>
        <begin position="199"/>
        <end position="219"/>
    </location>
</feature>
<feature type="domain" description="ABC transmembrane type-1" evidence="2">
    <location>
        <begin position="19"/>
        <end position="216"/>
    </location>
</feature>
<sequence>MPFDPLFLWETFIALLAGIPLALKLAVFSIAVGTVLAFSLALMRVSRRWWLDFPARFYIFAFRGTPLLVQIYIIYYGLSQFPGLRHSLLWPFLREAYWCALGALALNTAAYSAEIMRGGLLSVPAGQIEAARACGMARVLLFRRIIIPQAIRQMLPGYSNEVVLMVKSTSLASTITLMEITGIAAKLISETYRPVEVFACAGAIYLTMNFIAARLFALIEWSLWPERRKTRRPVDLADQKGELHV</sequence>